<reference key="1">
    <citation type="journal article" date="1991" name="EMBO J.">
        <title>Estrogen-dependent alterations in differentiation state of myeloid cells caused by a v-myb/estrogen receptor fusion protein.</title>
        <authorList>
            <person name="Burk O."/>
            <person name="Klempnauer K.-H."/>
        </authorList>
    </citation>
    <scope>NUCLEOTIDE SEQUENCE [MRNA]</scope>
    <source>
        <tissue>Bone marrow</tissue>
    </source>
</reference>
<reference key="2">
    <citation type="journal article" date="2010" name="Proc. Natl. Acad. Sci. U.S.A.">
        <title>Crystal structure of soluble MD-1 and its interaction with lipid IVa.</title>
        <authorList>
            <person name="Yoon S.I."/>
            <person name="Hong M."/>
            <person name="Han G.W."/>
            <person name="Wilson I.A."/>
        </authorList>
    </citation>
    <scope>X-RAY CRYSTALLOGRAPHY (2.0 ANGSTROMS) OF 21-160 IN COMPLEX WITH LPS PRECURSOR</scope>
    <scope>DISULFIDE BONDS</scope>
</reference>
<sequence length="160" mass="18114">MKTLNVLALVLVLLCINASTEWPTHTVCKEENLEIYYKSCDPQQDFAFSIDRCSDVTTHTFDIRAAMVLRQSIKELYAKVDLIINGKTVLSYSETLCGPGLSKLIFCGKKKGEHLYYEGPITLGIKEIPQRDYTITARLTNEDRATVACADFTVKNYLDY</sequence>
<organism>
    <name type="scientific">Gallus gallus</name>
    <name type="common">Chicken</name>
    <dbReference type="NCBI Taxonomy" id="9031"/>
    <lineage>
        <taxon>Eukaryota</taxon>
        <taxon>Metazoa</taxon>
        <taxon>Chordata</taxon>
        <taxon>Craniata</taxon>
        <taxon>Vertebrata</taxon>
        <taxon>Euteleostomi</taxon>
        <taxon>Archelosauria</taxon>
        <taxon>Archosauria</taxon>
        <taxon>Dinosauria</taxon>
        <taxon>Saurischia</taxon>
        <taxon>Theropoda</taxon>
        <taxon>Coelurosauria</taxon>
        <taxon>Aves</taxon>
        <taxon>Neognathae</taxon>
        <taxon>Galloanserae</taxon>
        <taxon>Galliformes</taxon>
        <taxon>Phasianidae</taxon>
        <taxon>Phasianinae</taxon>
        <taxon>Gallus</taxon>
    </lineage>
</organism>
<dbReference type="EMBL" id="X60450">
    <property type="protein sequence ID" value="CAA42980.1"/>
    <property type="molecule type" value="mRNA"/>
</dbReference>
<dbReference type="PIR" id="S18633">
    <property type="entry name" value="S18633"/>
</dbReference>
<dbReference type="RefSeq" id="NP_001004399.1">
    <property type="nucleotide sequence ID" value="NM_001004399.1"/>
</dbReference>
<dbReference type="PDB" id="3MTX">
    <property type="method" value="X-ray"/>
    <property type="resolution" value="2.00 A"/>
    <property type="chains" value="A/B=21-160"/>
</dbReference>
<dbReference type="PDB" id="3MU3">
    <property type="method" value="X-ray"/>
    <property type="resolution" value="2.40 A"/>
    <property type="chains" value="A/B=21-160"/>
</dbReference>
<dbReference type="PDBsum" id="3MTX"/>
<dbReference type="PDBsum" id="3MU3"/>
<dbReference type="SMR" id="Q90890"/>
<dbReference type="FunCoup" id="Q90890">
    <property type="interactions" value="14"/>
</dbReference>
<dbReference type="STRING" id="9031.ENSGALP00000070911"/>
<dbReference type="PaxDb" id="9031-ENSGALP00000020856"/>
<dbReference type="GeneID" id="420872"/>
<dbReference type="KEGG" id="gga:420872"/>
<dbReference type="CTD" id="9450"/>
<dbReference type="VEuPathDB" id="HostDB:geneid_420872"/>
<dbReference type="eggNOG" id="ENOG502S63U">
    <property type="taxonomic scope" value="Eukaryota"/>
</dbReference>
<dbReference type="InParanoid" id="Q90890"/>
<dbReference type="OrthoDB" id="9889383at2759"/>
<dbReference type="PhylomeDB" id="Q90890"/>
<dbReference type="EvolutionaryTrace" id="Q90890"/>
<dbReference type="PRO" id="PR:Q90890"/>
<dbReference type="Proteomes" id="UP000000539">
    <property type="component" value="Unassembled WGS sequence"/>
</dbReference>
<dbReference type="GO" id="GO:0005576">
    <property type="term" value="C:extracellular region"/>
    <property type="evidence" value="ECO:0007669"/>
    <property type="project" value="UniProtKB-SubCell"/>
</dbReference>
<dbReference type="GO" id="GO:0006954">
    <property type="term" value="P:inflammatory response"/>
    <property type="evidence" value="ECO:0007669"/>
    <property type="project" value="UniProtKB-KW"/>
</dbReference>
<dbReference type="GO" id="GO:0045087">
    <property type="term" value="P:innate immune response"/>
    <property type="evidence" value="ECO:0000318"/>
    <property type="project" value="GO_Central"/>
</dbReference>
<dbReference type="GO" id="GO:0031666">
    <property type="term" value="P:positive regulation of lipopolysaccharide-mediated signaling pathway"/>
    <property type="evidence" value="ECO:0000318"/>
    <property type="project" value="GO_Central"/>
</dbReference>
<dbReference type="CDD" id="cd00915">
    <property type="entry name" value="MD-1_MD-2"/>
    <property type="match status" value="1"/>
</dbReference>
<dbReference type="Gene3D" id="2.60.40.770">
    <property type="match status" value="1"/>
</dbReference>
<dbReference type="InterPro" id="IPR014756">
    <property type="entry name" value="Ig_E-set"/>
</dbReference>
<dbReference type="InterPro" id="IPR039945">
    <property type="entry name" value="LY86"/>
</dbReference>
<dbReference type="InterPro" id="IPR003172">
    <property type="entry name" value="ML_dom"/>
</dbReference>
<dbReference type="PANTHER" id="PTHR20838">
    <property type="entry name" value="LYMPHOCYTE ANTIGEN 86"/>
    <property type="match status" value="1"/>
</dbReference>
<dbReference type="PANTHER" id="PTHR20838:SF0">
    <property type="entry name" value="LYMPHOCYTE ANTIGEN 86"/>
    <property type="match status" value="1"/>
</dbReference>
<dbReference type="Pfam" id="PF02221">
    <property type="entry name" value="E1_DerP2_DerF2"/>
    <property type="match status" value="1"/>
</dbReference>
<dbReference type="SMART" id="SM00737">
    <property type="entry name" value="ML"/>
    <property type="match status" value="1"/>
</dbReference>
<dbReference type="SUPFAM" id="SSF81296">
    <property type="entry name" value="E set domains"/>
    <property type="match status" value="1"/>
</dbReference>
<gene>
    <name type="primary">LY86</name>
    <name type="synonym">MD1</name>
</gene>
<name>LY86_CHICK</name>
<proteinExistence type="evidence at protein level"/>
<evidence type="ECO:0000250" key="1"/>
<evidence type="ECO:0000255" key="2"/>
<evidence type="ECO:0000269" key="3">
    <source>
    </source>
</evidence>
<evidence type="ECO:0007829" key="4">
    <source>
        <dbReference type="PDB" id="3MTX"/>
    </source>
</evidence>
<evidence type="ECO:0007829" key="5">
    <source>
        <dbReference type="PDB" id="3MU3"/>
    </source>
</evidence>
<protein>
    <recommendedName>
        <fullName>Lymphocyte antigen 86</fullName>
        <shortName>Ly-86</shortName>
    </recommendedName>
    <alternativeName>
        <fullName>Protein MD-1</fullName>
    </alternativeName>
</protein>
<feature type="signal peptide" evidence="2">
    <location>
        <begin position="1"/>
        <end position="20"/>
    </location>
</feature>
<feature type="chain" id="PRO_0000018616" description="Lymphocyte antigen 86">
    <location>
        <begin position="21"/>
        <end position="160"/>
    </location>
</feature>
<feature type="disulfide bond" evidence="3">
    <location>
        <begin position="28"/>
        <end position="53"/>
    </location>
</feature>
<feature type="disulfide bond" evidence="3">
    <location>
        <begin position="40"/>
        <end position="149"/>
    </location>
</feature>
<feature type="disulfide bond" evidence="3">
    <location>
        <begin position="97"/>
        <end position="107"/>
    </location>
</feature>
<feature type="strand" evidence="4">
    <location>
        <begin position="25"/>
        <end position="30"/>
    </location>
</feature>
<feature type="strand" evidence="4">
    <location>
        <begin position="33"/>
        <end position="39"/>
    </location>
</feature>
<feature type="strand" evidence="4">
    <location>
        <begin position="47"/>
        <end position="51"/>
    </location>
</feature>
<feature type="helix" evidence="4">
    <location>
        <begin position="53"/>
        <end position="58"/>
    </location>
</feature>
<feature type="strand" evidence="4">
    <location>
        <begin position="60"/>
        <end position="68"/>
    </location>
</feature>
<feature type="strand" evidence="4">
    <location>
        <begin position="74"/>
        <end position="84"/>
    </location>
</feature>
<feature type="strand" evidence="4">
    <location>
        <begin position="87"/>
        <end position="98"/>
    </location>
</feature>
<feature type="turn" evidence="4">
    <location>
        <begin position="105"/>
        <end position="108"/>
    </location>
</feature>
<feature type="strand" evidence="4">
    <location>
        <begin position="114"/>
        <end position="122"/>
    </location>
</feature>
<feature type="strand" evidence="5">
    <location>
        <begin position="124"/>
        <end position="127"/>
    </location>
</feature>
<feature type="strand" evidence="4">
    <location>
        <begin position="131"/>
        <end position="141"/>
    </location>
</feature>
<feature type="strand" evidence="4">
    <location>
        <begin position="146"/>
        <end position="156"/>
    </location>
</feature>
<keyword id="KW-0002">3D-structure</keyword>
<keyword id="KW-1015">Disulfide bond</keyword>
<keyword id="KW-0391">Immunity</keyword>
<keyword id="KW-0395">Inflammatory response</keyword>
<keyword id="KW-0399">Innate immunity</keyword>
<keyword id="KW-1185">Reference proteome</keyword>
<keyword id="KW-0964">Secreted</keyword>
<keyword id="KW-0732">Signal</keyword>
<comment type="function">
    <text evidence="1">May cooperate with CD180 and TLR4 to mediate the innate immune response to bacterial lipopolysaccharide (LPS) and cytokine production. Important for efficient CD180 cell surface expression (By similarity).</text>
</comment>
<comment type="subunit">
    <text evidence="1">M-shaped tetramer of two CD180-LY86 heterodimers.</text>
</comment>
<comment type="subcellular location">
    <subcellularLocation>
        <location evidence="1">Secreted</location>
        <location evidence="1">Extracellular space</location>
    </subcellularLocation>
    <text evidence="1">Associated with CD180 at the cell surface.</text>
</comment>
<comment type="tissue specificity">
    <text>Detected in the macrophage-like 10.4 cells.</text>
</comment>
<comment type="induction">
    <text>By myb.</text>
</comment>
<accession>Q90890</accession>